<feature type="chain" id="PRO_0000428757" description="Ectoine hydrolase">
    <location>
        <begin position="1"/>
        <end position="399"/>
    </location>
</feature>
<feature type="helix" evidence="5">
    <location>
        <begin position="10"/>
        <end position="27"/>
    </location>
</feature>
<feature type="strand" evidence="5">
    <location>
        <begin position="30"/>
        <end position="34"/>
    </location>
</feature>
<feature type="helix" evidence="5">
    <location>
        <begin position="37"/>
        <end position="44"/>
    </location>
</feature>
<feature type="strand" evidence="5">
    <location>
        <begin position="56"/>
        <end position="59"/>
    </location>
</feature>
<feature type="strand" evidence="5">
    <location>
        <begin position="61"/>
        <end position="63"/>
    </location>
</feature>
<feature type="strand" evidence="5">
    <location>
        <begin position="66"/>
        <end position="70"/>
    </location>
</feature>
<feature type="helix" evidence="5">
    <location>
        <begin position="71"/>
        <end position="77"/>
    </location>
</feature>
<feature type="turn" evidence="5">
    <location>
        <begin position="78"/>
        <end position="80"/>
    </location>
</feature>
<feature type="helix" evidence="5">
    <location>
        <begin position="85"/>
        <end position="87"/>
    </location>
</feature>
<feature type="strand" evidence="5">
    <location>
        <begin position="88"/>
        <end position="91"/>
    </location>
</feature>
<feature type="helix" evidence="5">
    <location>
        <begin position="93"/>
        <end position="95"/>
    </location>
</feature>
<feature type="helix" evidence="5">
    <location>
        <begin position="103"/>
        <end position="109"/>
    </location>
</feature>
<feature type="helix" evidence="5">
    <location>
        <begin position="111"/>
        <end position="114"/>
    </location>
</feature>
<feature type="strand" evidence="5">
    <location>
        <begin position="118"/>
        <end position="124"/>
    </location>
</feature>
<feature type="helix" evidence="5">
    <location>
        <begin position="133"/>
        <end position="142"/>
    </location>
</feature>
<feature type="strand" evidence="5">
    <location>
        <begin position="146"/>
        <end position="150"/>
    </location>
</feature>
<feature type="helix" evidence="5">
    <location>
        <begin position="154"/>
        <end position="158"/>
    </location>
</feature>
<feature type="helix" evidence="5">
    <location>
        <begin position="164"/>
        <end position="187"/>
    </location>
</feature>
<feature type="helix" evidence="5">
    <location>
        <begin position="194"/>
        <end position="207"/>
    </location>
</feature>
<feature type="helix" evidence="5">
    <location>
        <begin position="231"/>
        <end position="235"/>
    </location>
</feature>
<feature type="strand" evidence="5">
    <location>
        <begin position="248"/>
        <end position="260"/>
    </location>
</feature>
<feature type="strand" evidence="5">
    <location>
        <begin position="263"/>
        <end position="274"/>
    </location>
</feature>
<feature type="helix" evidence="5">
    <location>
        <begin position="278"/>
        <end position="297"/>
    </location>
</feature>
<feature type="helix" evidence="5">
    <location>
        <begin position="304"/>
        <end position="317"/>
    </location>
</feature>
<feature type="strand" evidence="5">
    <location>
        <begin position="328"/>
        <end position="330"/>
    </location>
</feature>
<feature type="strand" evidence="5">
    <location>
        <begin position="359"/>
        <end position="362"/>
    </location>
</feature>
<feature type="strand" evidence="7">
    <location>
        <begin position="365"/>
        <end position="367"/>
    </location>
</feature>
<feature type="strand" evidence="7">
    <location>
        <begin position="372"/>
        <end position="374"/>
    </location>
</feature>
<feature type="strand" evidence="5">
    <location>
        <begin position="377"/>
        <end position="381"/>
    </location>
</feature>
<feature type="strand" evidence="5">
    <location>
        <begin position="383"/>
        <end position="390"/>
    </location>
</feature>
<feature type="strand" evidence="6">
    <location>
        <begin position="397"/>
        <end position="399"/>
    </location>
</feature>
<keyword id="KW-0002">3D-structure</keyword>
<keyword id="KW-0963">Cytoplasm</keyword>
<keyword id="KW-0378">Hydrolase</keyword>
<reference key="1">
    <citation type="journal article" date="2011" name="Environ. Microbiol.">
        <title>A blueprint of ectoine metabolism from the genome of the industrial producer Halomonas elongata DSM 2581(T).</title>
        <authorList>
            <person name="Schwibbert K."/>
            <person name="Marin-Sanguino A."/>
            <person name="Bagyan I."/>
            <person name="Heidrich G."/>
            <person name="Lentzen G."/>
            <person name="Seitz H."/>
            <person name="Rampp M."/>
            <person name="Schuster S.C."/>
            <person name="Klenk H.P."/>
            <person name="Pfeiffer F."/>
            <person name="Oesterhelt D."/>
            <person name="Kunte H.J."/>
        </authorList>
    </citation>
    <scope>NUCLEOTIDE SEQUENCE [LARGE SCALE GENOMIC DNA]</scope>
    <scope>FUNCTION</scope>
    <scope>CATALYTIC ACTIVITY</scope>
    <scope>SUBCELLULAR LOCATION</scope>
    <scope>DISRUPTION PHENOTYPE</scope>
    <scope>SUBSTRATE SPECIFICITY</scope>
    <scope>NOMENCLATURE</scope>
    <source>
        <strain>ATCC 33173 / DSM 2581 / NBRC 15536 / NCIMB 2198 / 1H9</strain>
    </source>
</reference>
<name>DOEA_HALED</name>
<protein>
    <recommendedName>
        <fullName>Ectoine hydrolase</fullName>
        <ecNumber evidence="1">3.5.4.44</ecNumber>
    </recommendedName>
</protein>
<proteinExistence type="evidence at protein level"/>
<gene>
    <name evidence="2" type="primary">doeA</name>
    <name type="ordered locus">HELO_3665</name>
</gene>
<evidence type="ECO:0000269" key="1">
    <source>
    </source>
</evidence>
<evidence type="ECO:0000303" key="2">
    <source>
    </source>
</evidence>
<evidence type="ECO:0000305" key="3"/>
<evidence type="ECO:0000305" key="4">
    <source>
    </source>
</evidence>
<evidence type="ECO:0007829" key="5">
    <source>
        <dbReference type="PDB" id="6TWJ"/>
    </source>
</evidence>
<evidence type="ECO:0007829" key="6">
    <source>
        <dbReference type="PDB" id="6TWK"/>
    </source>
</evidence>
<evidence type="ECO:0007829" key="7">
    <source>
        <dbReference type="PDB" id="6YO9"/>
    </source>
</evidence>
<accession>E1V7W1</accession>
<dbReference type="EC" id="3.5.4.44" evidence="1"/>
<dbReference type="EMBL" id="FN869568">
    <property type="protein sequence ID" value="CBV43549.1"/>
    <property type="molecule type" value="Genomic_DNA"/>
</dbReference>
<dbReference type="RefSeq" id="WP_013333421.1">
    <property type="nucleotide sequence ID" value="NC_014532.2"/>
</dbReference>
<dbReference type="PDB" id="6TWJ">
    <property type="method" value="X-ray"/>
    <property type="resolution" value="2.15 A"/>
    <property type="chains" value="A/B=2-399"/>
</dbReference>
<dbReference type="PDB" id="6TWK">
    <property type="method" value="X-ray"/>
    <property type="resolution" value="2.25 A"/>
    <property type="chains" value="A/B=1-399"/>
</dbReference>
<dbReference type="PDB" id="6YO9">
    <property type="method" value="X-ray"/>
    <property type="resolution" value="2.40 A"/>
    <property type="chains" value="A/B=1-399"/>
</dbReference>
<dbReference type="PDBsum" id="6TWJ"/>
<dbReference type="PDBsum" id="6TWK"/>
<dbReference type="PDBsum" id="6YO9"/>
<dbReference type="SMR" id="E1V7W1"/>
<dbReference type="STRING" id="768066.HELO_3665"/>
<dbReference type="GeneID" id="91011063"/>
<dbReference type="KEGG" id="hel:HELO_3665"/>
<dbReference type="eggNOG" id="COG0006">
    <property type="taxonomic scope" value="Bacteria"/>
</dbReference>
<dbReference type="HOGENOM" id="CLU_017266_3_1_6"/>
<dbReference type="OrthoDB" id="9761809at2"/>
<dbReference type="BioCyc" id="MetaCyc:MONOMER-20123"/>
<dbReference type="BRENDA" id="3.5.4.44">
    <property type="organism ID" value="2569"/>
</dbReference>
<dbReference type="Proteomes" id="UP000008707">
    <property type="component" value="Chromosome"/>
</dbReference>
<dbReference type="GO" id="GO:0005737">
    <property type="term" value="C:cytoplasm"/>
    <property type="evidence" value="ECO:0000314"/>
    <property type="project" value="UniProtKB"/>
</dbReference>
<dbReference type="GO" id="GO:0016812">
    <property type="term" value="F:hydrolase activity, acting on carbon-nitrogen (but not peptide) bonds, in cyclic amides"/>
    <property type="evidence" value="ECO:0000314"/>
    <property type="project" value="UniProtKB"/>
</dbReference>
<dbReference type="GO" id="GO:0042400">
    <property type="term" value="P:ectoine catabolic process"/>
    <property type="evidence" value="ECO:0000315"/>
    <property type="project" value="UniProtKB"/>
</dbReference>
<dbReference type="CDD" id="cd01066">
    <property type="entry name" value="APP_MetAP"/>
    <property type="match status" value="1"/>
</dbReference>
<dbReference type="FunFam" id="3.90.230.10:FF:000017">
    <property type="entry name" value="Ectoine hydrolase"/>
    <property type="match status" value="1"/>
</dbReference>
<dbReference type="FunFam" id="3.40.350.10:FF:000034">
    <property type="entry name" value="Ectoine hydrolase DoeA"/>
    <property type="match status" value="1"/>
</dbReference>
<dbReference type="Gene3D" id="3.90.230.10">
    <property type="entry name" value="Creatinase/methionine aminopeptidase superfamily"/>
    <property type="match status" value="1"/>
</dbReference>
<dbReference type="Gene3D" id="3.40.350.10">
    <property type="entry name" value="Creatinase/prolidase N-terminal domain"/>
    <property type="match status" value="1"/>
</dbReference>
<dbReference type="InterPro" id="IPR029149">
    <property type="entry name" value="Creatin/AminoP/Spt16_N"/>
</dbReference>
<dbReference type="InterPro" id="IPR036005">
    <property type="entry name" value="Creatinase/aminopeptidase-like"/>
</dbReference>
<dbReference type="InterPro" id="IPR000587">
    <property type="entry name" value="Creatinase_N"/>
</dbReference>
<dbReference type="InterPro" id="IPR014335">
    <property type="entry name" value="Ectoine_EutD"/>
</dbReference>
<dbReference type="InterPro" id="IPR000994">
    <property type="entry name" value="Pept_M24"/>
</dbReference>
<dbReference type="InterPro" id="IPR050659">
    <property type="entry name" value="Peptidase_M24B"/>
</dbReference>
<dbReference type="NCBIfam" id="TIGR02993">
    <property type="entry name" value="ectoine_eutD"/>
    <property type="match status" value="1"/>
</dbReference>
<dbReference type="PANTHER" id="PTHR46112">
    <property type="entry name" value="AMINOPEPTIDASE"/>
    <property type="match status" value="1"/>
</dbReference>
<dbReference type="PANTHER" id="PTHR46112:SF3">
    <property type="entry name" value="AMINOPEPTIDASE YPDF"/>
    <property type="match status" value="1"/>
</dbReference>
<dbReference type="Pfam" id="PF01321">
    <property type="entry name" value="Creatinase_N"/>
    <property type="match status" value="1"/>
</dbReference>
<dbReference type="Pfam" id="PF00557">
    <property type="entry name" value="Peptidase_M24"/>
    <property type="match status" value="1"/>
</dbReference>
<dbReference type="SUPFAM" id="SSF55920">
    <property type="entry name" value="Creatinase/aminopeptidase"/>
    <property type="match status" value="1"/>
</dbReference>
<dbReference type="SUPFAM" id="SSF53092">
    <property type="entry name" value="Creatinase/prolidase N-terminal domain"/>
    <property type="match status" value="1"/>
</dbReference>
<organism>
    <name type="scientific">Halomonas elongata (strain ATCC 33173 / DSM 2581 / NBRC 15536 / NCIMB 2198 / 1H9)</name>
    <dbReference type="NCBI Taxonomy" id="768066"/>
    <lineage>
        <taxon>Bacteria</taxon>
        <taxon>Pseudomonadati</taxon>
        <taxon>Pseudomonadota</taxon>
        <taxon>Gammaproteobacteria</taxon>
        <taxon>Oceanospirillales</taxon>
        <taxon>Halomonadaceae</taxon>
        <taxon>Halomonas</taxon>
    </lineage>
</organism>
<comment type="function">
    <text evidence="1">Involved in the degradation of ectoine, which allows H.elongata to utilize ectoine as both a carbon and a nitrogen source for growth. Catalyzes the hydrolysis of ectoine to N-acetyl-L-2,4-diaminobutyric acid (N-Ac-DABA). It can produce both isoforms N-gamma-acetyl-L-2,4-diaminobutyric acid (N-gamma-Ac-DABA) and N-alpha-acetyl-L-2,4-diaminobutyric acid (-Nalpha-Ac-DABA), however N-alpha-Ac-DABA is the essential substrate for the subsequent catabolic enzyme DoeB.</text>
</comment>
<comment type="catalytic activity">
    <reaction evidence="1">
        <text>L-ectoine + H2O = (2S)-2-acetamido-4-aminobutanoate</text>
        <dbReference type="Rhea" id="RHEA:52304"/>
        <dbReference type="ChEBI" id="CHEBI:15377"/>
        <dbReference type="ChEBI" id="CHEBI:58515"/>
        <dbReference type="ChEBI" id="CHEBI:77587"/>
        <dbReference type="EC" id="3.5.4.44"/>
    </reaction>
    <physiologicalReaction direction="left-to-right" evidence="1">
        <dbReference type="Rhea" id="RHEA:52305"/>
    </physiologicalReaction>
</comment>
<comment type="subcellular location">
    <subcellularLocation>
        <location evidence="1">Cytoplasm</location>
    </subcellularLocation>
</comment>
<comment type="disruption phenotype">
    <text evidence="1">Cells lacking this gene are unable to grow on ectoine as carbon source.</text>
</comment>
<comment type="miscellaneous">
    <text evidence="4">The ectoine biosynthesis and ectoine degradation operate via different isoforms of N-acetyl diamonbutyric acid: N-gamma-acetyl diamonbutyric acid is the intermediate of ectoine biosynthesis and N-alpha-acetyl diamonbutyric acid is the intermediate of ectoine degradation.</text>
</comment>
<comment type="similarity">
    <text evidence="3">Belongs to the peptidase M24 family.</text>
</comment>
<sequence length="399" mass="44949">MIQVSLPFTREEYAGRLWKVRTEMASRGIDVLVISDPSNMAWLTGYDGWSFYVHQCVLLGLEGEPVWYGRRMDANGALRTCWMDPDNITYYPDHYVQNPDMHPMDYLAQTILPDRGWHEGVVGMEMDNYYFSAKAYQCLLRELPHARFADANSLVNWCRAIKSPQEIEYMRVAGKIVAGMHSRILEVIEPGLPKSKLVSEIYRVGIEGWTSPEGKVFGGDYPAIVPMLPTGKDAAAPHLTWDDSPFREGEGTFFEIAGVYKRYHAPMSRTVYLGRPPSEFVRAESALLEGIENGLEVAKPGNRTADIAMALGAAMDKYGFDRGGARCGYPIGISYPPDWGERTMSLRPSDETILEPGMTFHFMPGLWVEDWGLEITESILITESGCETLADFPRQLFVK</sequence>